<evidence type="ECO:0000255" key="1">
    <source>
        <dbReference type="HAMAP-Rule" id="MF_01622"/>
    </source>
</evidence>
<proteinExistence type="inferred from homology"/>
<gene>
    <name evidence="1" type="primary">selU</name>
    <name type="ordered locus">PSPA7_3629</name>
</gene>
<dbReference type="EC" id="2.9.1.3" evidence="1"/>
<dbReference type="EMBL" id="CP000744">
    <property type="protein sequence ID" value="ABR84869.1"/>
    <property type="molecule type" value="Genomic_DNA"/>
</dbReference>
<dbReference type="RefSeq" id="WP_012076255.1">
    <property type="nucleotide sequence ID" value="NC_009656.1"/>
</dbReference>
<dbReference type="SMR" id="A6V7E9"/>
<dbReference type="KEGG" id="pap:PSPA7_3629"/>
<dbReference type="HOGENOM" id="CLU_043456_1_0_6"/>
<dbReference type="Proteomes" id="UP000001582">
    <property type="component" value="Chromosome"/>
</dbReference>
<dbReference type="GO" id="GO:0016765">
    <property type="term" value="F:transferase activity, transferring alkyl or aryl (other than methyl) groups"/>
    <property type="evidence" value="ECO:0007669"/>
    <property type="project" value="UniProtKB-UniRule"/>
</dbReference>
<dbReference type="GO" id="GO:0043828">
    <property type="term" value="F:tRNA 2-selenouridine synthase activity"/>
    <property type="evidence" value="ECO:0007669"/>
    <property type="project" value="UniProtKB-EC"/>
</dbReference>
<dbReference type="GO" id="GO:0002098">
    <property type="term" value="P:tRNA wobble uridine modification"/>
    <property type="evidence" value="ECO:0007669"/>
    <property type="project" value="UniProtKB-UniRule"/>
</dbReference>
<dbReference type="CDD" id="cd01520">
    <property type="entry name" value="RHOD_YbbB"/>
    <property type="match status" value="1"/>
</dbReference>
<dbReference type="FunFam" id="3.40.250.10:FF:000009">
    <property type="entry name" value="tRNA 2-selenouridine/geranyl-2-thiouridine synthase"/>
    <property type="match status" value="1"/>
</dbReference>
<dbReference type="Gene3D" id="3.40.250.10">
    <property type="entry name" value="Rhodanese-like domain"/>
    <property type="match status" value="1"/>
</dbReference>
<dbReference type="HAMAP" id="MF_01622">
    <property type="entry name" value="tRNA_sel_U_synth"/>
    <property type="match status" value="1"/>
</dbReference>
<dbReference type="InterPro" id="IPR027417">
    <property type="entry name" value="P-loop_NTPase"/>
</dbReference>
<dbReference type="InterPro" id="IPR001763">
    <property type="entry name" value="Rhodanese-like_dom"/>
</dbReference>
<dbReference type="InterPro" id="IPR036873">
    <property type="entry name" value="Rhodanese-like_dom_sf"/>
</dbReference>
<dbReference type="InterPro" id="IPR017582">
    <property type="entry name" value="SelU"/>
</dbReference>
<dbReference type="NCBIfam" id="NF008751">
    <property type="entry name" value="PRK11784.1-3"/>
    <property type="match status" value="1"/>
</dbReference>
<dbReference type="NCBIfam" id="TIGR03167">
    <property type="entry name" value="tRNA_sel_U_synt"/>
    <property type="match status" value="1"/>
</dbReference>
<dbReference type="PANTHER" id="PTHR30401">
    <property type="entry name" value="TRNA 2-SELENOURIDINE SYNTHASE"/>
    <property type="match status" value="1"/>
</dbReference>
<dbReference type="PANTHER" id="PTHR30401:SF0">
    <property type="entry name" value="TRNA 2-SELENOURIDINE SYNTHASE"/>
    <property type="match status" value="1"/>
</dbReference>
<dbReference type="SMART" id="SM00450">
    <property type="entry name" value="RHOD"/>
    <property type="match status" value="1"/>
</dbReference>
<dbReference type="SUPFAM" id="SSF52540">
    <property type="entry name" value="P-loop containing nucleoside triphosphate hydrolases"/>
    <property type="match status" value="1"/>
</dbReference>
<dbReference type="SUPFAM" id="SSF52821">
    <property type="entry name" value="Rhodanese/Cell cycle control phosphatase"/>
    <property type="match status" value="1"/>
</dbReference>
<dbReference type="PROSITE" id="PS50206">
    <property type="entry name" value="RHODANESE_3"/>
    <property type="match status" value="1"/>
</dbReference>
<reference key="1">
    <citation type="submission" date="2007-06" db="EMBL/GenBank/DDBJ databases">
        <authorList>
            <person name="Dodson R.J."/>
            <person name="Harkins D."/>
            <person name="Paulsen I.T."/>
        </authorList>
    </citation>
    <scope>NUCLEOTIDE SEQUENCE [LARGE SCALE GENOMIC DNA]</scope>
    <source>
        <strain>DSM 24068 / PA7</strain>
    </source>
</reference>
<sequence>MRDNTQHYRELFLEDTPLMDVRAPVEYHKGAFPHTVNRPLMNDIERQKVGTSYKQHGQQAAIALGHELVCGAVKAERLAAWKAFAEANPNGYLYCFRGGLRSQIVQQWLKQDAGIDYPRVIGGYKALRNFLFETTRAAVDECDFVLVGGLTGCGKTEVIAALDNSLDLEGHANHRGSSFGRRATPQPAQIDFENRLAIDILKKRHRGVGQFVLEDEGRIVGSCSLPLELYQGMQGYPLVWLEDGFEQRVARILKDYVIDLRSEFERVVGAEEGFAVFSAYLQKSLAGIVKRLGGERYQRLAAILVQALEEQGRDGSVETHRGWIEGLLKEYYDPMYAFQRQSKEDRVEFRGNQAEVIAYLRQRQALRPS</sequence>
<organism>
    <name type="scientific">Pseudomonas paraeruginosa (strain DSM 24068 / PA7)</name>
    <name type="common">Pseudomonas aeruginosa (strain PA7)</name>
    <dbReference type="NCBI Taxonomy" id="381754"/>
    <lineage>
        <taxon>Bacteria</taxon>
        <taxon>Pseudomonadati</taxon>
        <taxon>Pseudomonadota</taxon>
        <taxon>Gammaproteobacteria</taxon>
        <taxon>Pseudomonadales</taxon>
        <taxon>Pseudomonadaceae</taxon>
        <taxon>Pseudomonas</taxon>
        <taxon>Pseudomonas paraeruginosa</taxon>
    </lineage>
</organism>
<comment type="function">
    <text evidence="1">Involved in the post-transcriptional modification of the uridine at the wobble position (U34) of tRNA(Lys), tRNA(Glu) and tRNA(Gln). Catalyzes the conversion of 2-thiouridine (S2U-RNA) to 2-selenouridine (Se2U-RNA). Acts in a two-step process involving geranylation of 2-thiouridine (S2U) to S-geranyl-2-thiouridine (geS2U) and subsequent selenation of the latter derivative to 2-selenouridine (Se2U) in the tRNA chain.</text>
</comment>
<comment type="catalytic activity">
    <reaction evidence="1">
        <text>5-methylaminomethyl-2-thiouridine(34) in tRNA + selenophosphate + (2E)-geranyl diphosphate + H2O + H(+) = 5-methylaminomethyl-2-selenouridine(34) in tRNA + (2E)-thiogeraniol + phosphate + diphosphate</text>
        <dbReference type="Rhea" id="RHEA:42716"/>
        <dbReference type="Rhea" id="RHEA-COMP:10195"/>
        <dbReference type="Rhea" id="RHEA-COMP:10196"/>
        <dbReference type="ChEBI" id="CHEBI:15377"/>
        <dbReference type="ChEBI" id="CHEBI:15378"/>
        <dbReference type="ChEBI" id="CHEBI:16144"/>
        <dbReference type="ChEBI" id="CHEBI:33019"/>
        <dbReference type="ChEBI" id="CHEBI:43474"/>
        <dbReference type="ChEBI" id="CHEBI:58057"/>
        <dbReference type="ChEBI" id="CHEBI:74455"/>
        <dbReference type="ChEBI" id="CHEBI:82743"/>
        <dbReference type="ChEBI" id="CHEBI:143703"/>
        <dbReference type="EC" id="2.9.1.3"/>
    </reaction>
    <physiologicalReaction direction="left-to-right" evidence="1">
        <dbReference type="Rhea" id="RHEA:42717"/>
    </physiologicalReaction>
</comment>
<comment type="catalytic activity">
    <reaction evidence="1">
        <text>5-methylaminomethyl-2-thiouridine(34) in tRNA + (2E)-geranyl diphosphate = 5-methylaminomethyl-S-(2E)-geranyl-thiouridine(34) in tRNA + diphosphate</text>
        <dbReference type="Rhea" id="RHEA:14085"/>
        <dbReference type="Rhea" id="RHEA-COMP:10195"/>
        <dbReference type="Rhea" id="RHEA-COMP:14654"/>
        <dbReference type="ChEBI" id="CHEBI:33019"/>
        <dbReference type="ChEBI" id="CHEBI:58057"/>
        <dbReference type="ChEBI" id="CHEBI:74455"/>
        <dbReference type="ChEBI" id="CHEBI:140632"/>
    </reaction>
    <physiologicalReaction direction="left-to-right" evidence="1">
        <dbReference type="Rhea" id="RHEA:14086"/>
    </physiologicalReaction>
</comment>
<comment type="catalytic activity">
    <reaction evidence="1">
        <text>5-methylaminomethyl-S-(2E)-geranyl-thiouridine(34) in tRNA + selenophosphate + H(+) = 5-methylaminomethyl-2-(Se-phospho)selenouridine(34) in tRNA + (2E)-thiogeraniol</text>
        <dbReference type="Rhea" id="RHEA:60172"/>
        <dbReference type="Rhea" id="RHEA-COMP:14654"/>
        <dbReference type="Rhea" id="RHEA-COMP:15523"/>
        <dbReference type="ChEBI" id="CHEBI:15378"/>
        <dbReference type="ChEBI" id="CHEBI:16144"/>
        <dbReference type="ChEBI" id="CHEBI:140632"/>
        <dbReference type="ChEBI" id="CHEBI:143702"/>
        <dbReference type="ChEBI" id="CHEBI:143703"/>
    </reaction>
    <physiologicalReaction direction="left-to-right" evidence="1">
        <dbReference type="Rhea" id="RHEA:60173"/>
    </physiologicalReaction>
</comment>
<comment type="catalytic activity">
    <reaction evidence="1">
        <text>5-methylaminomethyl-2-(Se-phospho)selenouridine(34) in tRNA + H2O = 5-methylaminomethyl-2-selenouridine(34) in tRNA + phosphate</text>
        <dbReference type="Rhea" id="RHEA:60176"/>
        <dbReference type="Rhea" id="RHEA-COMP:10196"/>
        <dbReference type="Rhea" id="RHEA-COMP:15523"/>
        <dbReference type="ChEBI" id="CHEBI:15377"/>
        <dbReference type="ChEBI" id="CHEBI:43474"/>
        <dbReference type="ChEBI" id="CHEBI:82743"/>
        <dbReference type="ChEBI" id="CHEBI:143702"/>
    </reaction>
    <physiologicalReaction direction="left-to-right" evidence="1">
        <dbReference type="Rhea" id="RHEA:60177"/>
    </physiologicalReaction>
</comment>
<comment type="subunit">
    <text evidence="1">Monomer.</text>
</comment>
<comment type="similarity">
    <text evidence="1">Belongs to the SelU family.</text>
</comment>
<feature type="chain" id="PRO_1000069589" description="tRNA 2-selenouridine synthase">
    <location>
        <begin position="1"/>
        <end position="369"/>
    </location>
</feature>
<feature type="domain" description="Rhodanese" evidence="1">
    <location>
        <begin position="12"/>
        <end position="136"/>
    </location>
</feature>
<feature type="active site" description="S-selanylcysteine intermediate" evidence="1">
    <location>
        <position position="95"/>
    </location>
</feature>
<name>SELU_PSEP7</name>
<protein>
    <recommendedName>
        <fullName evidence="1">tRNA 2-selenouridine synthase</fullName>
        <ecNumber evidence="1">2.9.1.3</ecNumber>
    </recommendedName>
</protein>
<keyword id="KW-0711">Selenium</keyword>
<keyword id="KW-0808">Transferase</keyword>
<accession>A6V7E9</accession>